<keyword id="KW-0106">Calcium</keyword>
<keyword id="KW-0378">Hydrolase</keyword>
<keyword id="KW-0442">Lipid degradation</keyword>
<keyword id="KW-0443">Lipid metabolism</keyword>
<keyword id="KW-0479">Metal-binding</keyword>
<keyword id="KW-0964">Secreted</keyword>
<evidence type="ECO:0000250" key="1">
    <source>
        <dbReference type="UniProtKB" id="P22088"/>
    </source>
</evidence>
<evidence type="ECO:0000250" key="2">
    <source>
        <dbReference type="UniProtKB" id="P26876"/>
    </source>
</evidence>
<evidence type="ECO:0000255" key="3"/>
<evidence type="ECO:0000269" key="4">
    <source>
    </source>
</evidence>
<evidence type="ECO:0000269" key="5">
    <source>
    </source>
</evidence>
<evidence type="ECO:0000269" key="6">
    <source>
    </source>
</evidence>
<evidence type="ECO:0000303" key="7">
    <source>
    </source>
</evidence>
<evidence type="ECO:0000303" key="8">
    <source>
    </source>
</evidence>
<evidence type="ECO:0000303" key="9">
    <source>
    </source>
</evidence>
<evidence type="ECO:0000305" key="10"/>
<evidence type="ECO:0000305" key="11">
    <source>
    </source>
</evidence>
<evidence type="ECO:0000305" key="12">
    <source>
    </source>
</evidence>
<evidence type="ECO:0000305" key="13">
    <source>
    </source>
</evidence>
<evidence type="ECO:0000305" key="14">
    <source>
    </source>
</evidence>
<evidence type="ECO:0000312" key="15">
    <source>
        <dbReference type="EMBL" id="SDU12804.1"/>
    </source>
</evidence>
<gene>
    <name type="primary">lips</name>
    <name evidence="15" type="ORF">SAMN05216594_0967</name>
</gene>
<feature type="chain" id="PRO_0000017744" description="Triacylglycerol lipase">
    <location>
        <begin position="1"/>
        <end position="293"/>
    </location>
</feature>
<feature type="domain" description="AB hydrolase-1" evidence="3">
    <location>
        <begin position="10"/>
        <end position="206"/>
    </location>
</feature>
<feature type="active site" description="Nucleophile" evidence="2">
    <location>
        <position position="83"/>
    </location>
</feature>
<feature type="active site" description="Charge relay system" evidence="2">
    <location>
        <position position="238"/>
    </location>
</feature>
<feature type="active site" description="Charge relay system" evidence="2">
    <location>
        <position position="260"/>
    </location>
</feature>
<feature type="binding site" evidence="1">
    <location>
        <position position="17"/>
    </location>
    <ligand>
        <name>substrate</name>
    </ligand>
</feature>
<feature type="binding site" evidence="1">
    <location>
        <position position="84"/>
    </location>
    <ligand>
        <name>substrate</name>
    </ligand>
</feature>
<feature type="binding site" evidence="2">
    <location>
        <position position="217"/>
    </location>
    <ligand>
        <name>Ca(2+)</name>
        <dbReference type="ChEBI" id="CHEBI:29108"/>
    </ligand>
</feature>
<feature type="binding site" evidence="2">
    <location>
        <position position="262"/>
    </location>
    <ligand>
        <name>Ca(2+)</name>
        <dbReference type="ChEBI" id="CHEBI:29108"/>
    </ligand>
</feature>
<feature type="binding site" evidence="11">
    <location>
        <position position="266"/>
    </location>
    <ligand>
        <name>Ca(2+)</name>
        <dbReference type="ChEBI" id="CHEBI:29108"/>
    </ligand>
</feature>
<feature type="binding site" evidence="11">
    <location>
        <position position="269"/>
    </location>
    <ligand>
        <name>Ca(2+)</name>
        <dbReference type="ChEBI" id="CHEBI:29108"/>
    </ligand>
</feature>
<feature type="mutagenesis site" description="Increases the activity toward tricaprylin (C8). The lipase is slightly destabilized at 27 degrees Celsius." evidence="5">
    <original>T</original>
    <variation>V</variation>
    <location>
        <position position="137"/>
    </location>
</feature>
<feature type="mutagenesis site" description="Increases the activity toward tricaprylin (C8). The lipase is slightly destabilized at 27 degrees Celsius." evidence="5">
    <original>T</original>
    <variation>N</variation>
    <location>
        <position position="138"/>
    </location>
</feature>
<feature type="mutagenesis site" description="Increases the activity toward trilaurin (C12). The lipase is destabilized at 27 degrees Celsius." evidence="5">
    <original>S</original>
    <variation>G</variation>
    <location>
        <position position="141"/>
    </location>
</feature>
<dbReference type="EC" id="3.1.1.3" evidence="4 6 12"/>
<dbReference type="EMBL" id="X14033">
    <property type="protein sequence ID" value="CAA32193.1"/>
    <property type="status" value="ALT_FRAME"/>
    <property type="molecule type" value="Genomic_DNA"/>
</dbReference>
<dbReference type="EMBL" id="AJ250176">
    <property type="protein sequence ID" value="CAC07191.1"/>
    <property type="molecule type" value="Genomic_DNA"/>
</dbReference>
<dbReference type="EMBL" id="LT629783">
    <property type="protein sequence ID" value="SDU12804.1"/>
    <property type="molecule type" value="Genomic_DNA"/>
</dbReference>
<dbReference type="EMBL" id="M14604">
    <property type="protein sequence ID" value="AAA25879.1"/>
    <property type="status" value="ALT_FRAME"/>
    <property type="molecule type" value="Genomic_DNA"/>
</dbReference>
<dbReference type="PIR" id="S02005">
    <property type="entry name" value="S02005"/>
</dbReference>
<dbReference type="RefSeq" id="WP_016781240.1">
    <property type="nucleotide sequence ID" value="NZ_SDUZ01000028.1"/>
</dbReference>
<dbReference type="SMR" id="P08658"/>
<dbReference type="STRING" id="296.B6D87_13035"/>
<dbReference type="ESTHER" id="psefr-lipas">
    <property type="family name" value="Bacterial_lip_FamI.1"/>
</dbReference>
<dbReference type="eggNOG" id="COG1075">
    <property type="taxonomic scope" value="Bacteria"/>
</dbReference>
<dbReference type="OrthoDB" id="2004167at2"/>
<dbReference type="BRENDA" id="3.1.1.3">
    <property type="organism ID" value="5123"/>
</dbReference>
<dbReference type="GO" id="GO:0005576">
    <property type="term" value="C:extracellular region"/>
    <property type="evidence" value="ECO:0007669"/>
    <property type="project" value="UniProtKB-SubCell"/>
</dbReference>
<dbReference type="GO" id="GO:0046872">
    <property type="term" value="F:metal ion binding"/>
    <property type="evidence" value="ECO:0007669"/>
    <property type="project" value="UniProtKB-KW"/>
</dbReference>
<dbReference type="GO" id="GO:0004806">
    <property type="term" value="F:triacylglycerol lipase activity"/>
    <property type="evidence" value="ECO:0007669"/>
    <property type="project" value="UniProtKB-EC"/>
</dbReference>
<dbReference type="GO" id="GO:0016042">
    <property type="term" value="P:lipid catabolic process"/>
    <property type="evidence" value="ECO:0007669"/>
    <property type="project" value="UniProtKB-KW"/>
</dbReference>
<dbReference type="Gene3D" id="3.40.50.1820">
    <property type="entry name" value="alpha/beta hydrolase"/>
    <property type="match status" value="1"/>
</dbReference>
<dbReference type="InterPro" id="IPR000073">
    <property type="entry name" value="AB_hydrolase_1"/>
</dbReference>
<dbReference type="InterPro" id="IPR029058">
    <property type="entry name" value="AB_hydrolase_fold"/>
</dbReference>
<dbReference type="Pfam" id="PF00561">
    <property type="entry name" value="Abhydrolase_1"/>
    <property type="match status" value="1"/>
</dbReference>
<dbReference type="SUPFAM" id="SSF53474">
    <property type="entry name" value="alpha/beta-Hydrolases"/>
    <property type="match status" value="1"/>
</dbReference>
<dbReference type="PROSITE" id="PS00120">
    <property type="entry name" value="LIPASE_SER"/>
    <property type="match status" value="1"/>
</dbReference>
<organism>
    <name type="scientific">Pseudomonas fragi</name>
    <dbReference type="NCBI Taxonomy" id="296"/>
    <lineage>
        <taxon>Bacteria</taxon>
        <taxon>Pseudomonadati</taxon>
        <taxon>Pseudomonadota</taxon>
        <taxon>Gammaproteobacteria</taxon>
        <taxon>Pseudomonadales</taxon>
        <taxon>Pseudomonadaceae</taxon>
        <taxon>Pseudomonas</taxon>
    </lineage>
</organism>
<protein>
    <recommendedName>
        <fullName evidence="9">Triacylglycerol lipase</fullName>
        <ecNumber evidence="4 6 12">3.1.1.3</ecNumber>
    </recommendedName>
    <alternativeName>
        <fullName evidence="7">Cold-adapted lipase</fullName>
    </alternativeName>
    <alternativeName>
        <fullName evidence="8">Extracellular lipase</fullName>
    </alternativeName>
    <alternativeName>
        <fullName evidence="2">Triacylglycerol ester hydrolase</fullName>
    </alternativeName>
</protein>
<accession>P08658</accession>
<accession>Q9EV86</accession>
<sequence>MDDSVNTRYPILLVHGLFGFDRIGSHHYFHGIKQALNECGASVFVPIISAANDNEARGDQLLKQIHNLRRQVGAQRVNLIGHSQGALTARYVAAIAPELIASVTSVSGPNHGSELADRLRLAFVPGRLGETVAAALTTSFSAFLSALSGHPRLPQNALNALNALTTDGVAAFNRQYPQGLPDRWGGMGPAQVNAVHYYSWSGIIKGSRLAESLNLLDPLHNALRVFDSFFTRETRENDGMVGRFSSHLGQVIRSDYPLDHLDTINHMARGSRRRINPVELYIEHAKRLKEAGL</sequence>
<proteinExistence type="evidence at protein level"/>
<reference key="1">
    <citation type="journal article" date="1988" name="FEBS Lett.">
        <title>Cloning, sequencing and expression of the lipase gene from Pseudomonas fragi IFO-12049 in E. coli.</title>
        <authorList>
            <person name="Aoyama S."/>
            <person name="Yoshida N."/>
            <person name="Inouye S."/>
        </authorList>
    </citation>
    <scope>NUCLEOTIDE SEQUENCE [GENOMIC DNA]</scope>
    <scope>SUBCELLULAR LOCATION</scope>
    <source>
        <strain>JCM 20237 / NBRC 12049 / IAM 1650</strain>
    </source>
</reference>
<reference key="2">
    <citation type="journal article" date="2005" name="FEBS Lett.">
        <title>Mutations in the lid region affect chain length specificity and thermostability of a Pseudomonas fragi lipase.</title>
        <authorList>
            <person name="Santarossa G."/>
            <person name="Lafranconi P.G."/>
            <person name="Alquati C."/>
            <person name="DeGioia L."/>
            <person name="Alberghina L."/>
            <person name="Fantucci P."/>
            <person name="Lotti M."/>
        </authorList>
    </citation>
    <scope>NUCLEOTIDE SEQUENCE [GENOMIC DNA]</scope>
    <scope>FUNCTION</scope>
    <scope>CATALYTIC ACTIVITY</scope>
    <scope>MUTAGENESIS OF THR-137; THR-138 AND SER-141</scope>
    <scope>SUBSTRATE SPECIFICITY</scope>
    <source>
        <strain>ATCC 4973 / DSM 3456 / LMG 2191 / NBRC 3458 / NRRL B-25 / VKM B-898</strain>
    </source>
</reference>
<reference key="3">
    <citation type="submission" date="2016-10" db="EMBL/GenBank/DDBJ databases">
        <authorList>
            <person name="Varghese N."/>
        </authorList>
    </citation>
    <scope>NUCLEOTIDE SEQUENCE [LARGE SCALE GENOMIC DNA]</scope>
    <source>
        <strain evidence="15">NRRL B-727</strain>
    </source>
</reference>
<reference key="4">
    <citation type="journal article" date="1986" name="Biochem. Biophys. Res. Commun.">
        <title>Molecular cloning and nucleotide sequence of the lipase gene from Pseudomonas fragi.</title>
        <authorList>
            <person name="Kugimiya W."/>
            <person name="Otani Y."/>
            <person name="Hashimoto Y."/>
            <person name="Takagi Y."/>
        </authorList>
    </citation>
    <scope>NUCLEOTIDE SEQUENCE [GENOMIC DNA] OF 1-135</scope>
    <source>
        <strain>ATCC 4973 / DSM 3456 / LMG 2191 / NBRC 3458 / NRRL B-25 / VKM B-898</strain>
    </source>
</reference>
<reference key="5">
    <citation type="journal article" date="1965" name="Biochim. Biophys. Acta">
        <title>The extracellular nature of the lipase of Pseudomonas fragi.</title>
        <authorList>
            <person name="Mencher J.R."/>
            <person name="Ng H."/>
            <person name="Alford J.A."/>
        </authorList>
    </citation>
    <scope>SUBCELLULAR LOCATION</scope>
</reference>
<reference key="6">
    <citation type="journal article" date="1967" name="J. Gen. Microbiol.">
        <title>Purification and characterization of the lipase of Pseudomonas fragi.</title>
        <authorList>
            <person name="Mencher J.R."/>
            <person name="Alford J.A."/>
        </authorList>
    </citation>
    <scope>FUNCTION</scope>
    <scope>CATALYTIC ACTIVITY</scope>
    <scope>BIOPHYSICOCHEMICAL PROPERTIES</scope>
    <scope>SUBSTRATE SPECIFICITY</scope>
    <source>
        <strain>ATCC 4973 / DSM 3456 / LMG 2191 / NBRC 3458 / NRRL B-25 / VKM B-898</strain>
    </source>
</reference>
<reference key="7">
    <citation type="journal article" date="2002" name="Eur. J. Biochem.">
        <title>The cold-active lipase of Pseudomonas fragi. Heterologous expression, biochemical characterization and molecular modeling.</title>
        <authorList>
            <person name="Alquati C."/>
            <person name="De Gioia L."/>
            <person name="Santarossa G."/>
            <person name="Alberghina L."/>
            <person name="Fantucci P."/>
            <person name="Lotti M."/>
        </authorList>
    </citation>
    <scope>FUNCTION</scope>
    <scope>CATALYTIC ACTIVITY</scope>
    <scope>BIOPHYSICOCHEMICAL PROPERTIES</scope>
    <scope>COFACTOR</scope>
    <scope>SUBSTRATE SPECIFICITY</scope>
    <scope>3D-STRUCTURE MODELING</scope>
</reference>
<name>LIP_PSEFR</name>
<comment type="function">
    <text evidence="4 5 6">Catalyzes the hydrolysis of triacylglycerols, with the highest activity with tributyrin (C4), lower activity with tricaprylin (C8), and much lower activity with triacetin (C2), trilaurin (C12) and triolein (C18).</text>
</comment>
<comment type="catalytic activity">
    <reaction evidence="4 6 12">
        <text>a triacylglycerol + H2O = a diacylglycerol + a fatty acid + H(+)</text>
        <dbReference type="Rhea" id="RHEA:12044"/>
        <dbReference type="ChEBI" id="CHEBI:15377"/>
        <dbReference type="ChEBI" id="CHEBI:15378"/>
        <dbReference type="ChEBI" id="CHEBI:17855"/>
        <dbReference type="ChEBI" id="CHEBI:18035"/>
        <dbReference type="ChEBI" id="CHEBI:28868"/>
        <dbReference type="EC" id="3.1.1.3"/>
    </reaction>
</comment>
<comment type="cofactor">
    <cofactor evidence="4">
        <name>Ca(2+)</name>
        <dbReference type="ChEBI" id="CHEBI:29108"/>
    </cofactor>
    <text evidence="2">Binds 1 Ca(2+) ion per subunit.</text>
</comment>
<comment type="biophysicochemical properties">
    <kinetics>
        <KM evidence="6">0.9 mM for tributyrin</KM>
    </kinetics>
    <phDependence>
        <text evidence="4 6">Optimum pH is 8.8-9.</text>
    </phDependence>
    <temperatureDependence>
        <text evidence="4 6">Optimum temperature is 29 degrees Celsius (PubMed:12084074). Stable at 10 degrees Celsius, but above this temperature the activity decreases. The enzyme is completely inactivated at 40 degrees Celsius (PubMed:12084074, PubMed:6052627).</text>
    </temperatureDependence>
</comment>
<comment type="subcellular location">
    <subcellularLocation>
        <location evidence="13 14">Secreted</location>
    </subcellularLocation>
</comment>
<comment type="miscellaneous">
    <text evidence="11">The lack of a signal peptide at the N-terminal suggests that this lipase might be secreted by a signal peptide-independent pathway.</text>
</comment>
<comment type="similarity">
    <text evidence="10">Belongs to the AB hydrolase superfamily. Pseudomonas lipase family.</text>
</comment>
<comment type="sequence caution" evidence="10">
    <conflict type="frameshift">
        <sequence resource="EMBL-CDS" id="AAA25879"/>
    </conflict>
</comment>
<comment type="sequence caution" evidence="10">
    <conflict type="frameshift">
        <sequence resource="EMBL-CDS" id="CAA32193"/>
    </conflict>
</comment>